<reference key="1">
    <citation type="journal article" date="1993" name="J. Bacteriol.">
        <title>Complementation analysis and regulation of CO2 fixation gene expression in a ribulose 1,5-bisphosphate carboxylase-oxygenase deletion strain of Rhodospirillum rubrum.</title>
        <authorList>
            <person name="Falcone D.L."/>
            <person name="Tabita F.R."/>
        </authorList>
    </citation>
    <scope>NUCLEOTIDE SEQUENCE [GENOMIC DNA]</scope>
    <source>
        <strain>STR-2</strain>
    </source>
</reference>
<reference key="2">
    <citation type="journal article" date="1995" name="Plant Mol. Biol.">
        <title>Cloning of the amphibolic Calvin cycle/OPPP enzyme D-ribulose-5-phosphate 3-epimerase (EC 5.1.3.1) from spinach chloroplasts: functional and evolutionary aspects.</title>
        <authorList>
            <person name="Nowitzki U."/>
            <person name="Wyrich R."/>
            <person name="Westhoff P."/>
            <person name="Henze K."/>
            <person name="Schnarrenberger C."/>
            <person name="Martin W.F."/>
        </authorList>
    </citation>
    <scope>CONCEPTUAL TRANSLATION</scope>
</reference>
<dbReference type="EC" id="5.1.3.1" evidence="1"/>
<dbReference type="EMBL" id="S64484">
    <property type="protein sequence ID" value="AAB27778.1"/>
    <property type="status" value="ALT_FRAME"/>
    <property type="molecule type" value="Genomic_DNA"/>
</dbReference>
<dbReference type="PIR" id="A53305">
    <property type="entry name" value="A53305"/>
</dbReference>
<dbReference type="SMR" id="P51013"/>
<dbReference type="GO" id="GO:0004750">
    <property type="term" value="F:D-ribulose-phosphate 3-epimerase activity"/>
    <property type="evidence" value="ECO:0007669"/>
    <property type="project" value="UniProtKB-UniRule"/>
</dbReference>
<dbReference type="GO" id="GO:0046872">
    <property type="term" value="F:metal ion binding"/>
    <property type="evidence" value="ECO:0007669"/>
    <property type="project" value="UniProtKB-UniRule"/>
</dbReference>
<dbReference type="GO" id="GO:0019323">
    <property type="term" value="P:pentose catabolic process"/>
    <property type="evidence" value="ECO:0007669"/>
    <property type="project" value="UniProtKB-UniRule"/>
</dbReference>
<dbReference type="GO" id="GO:0006098">
    <property type="term" value="P:pentose-phosphate shunt"/>
    <property type="evidence" value="ECO:0007669"/>
    <property type="project" value="InterPro"/>
</dbReference>
<dbReference type="GO" id="GO:0019253">
    <property type="term" value="P:reductive pentose-phosphate cycle"/>
    <property type="evidence" value="ECO:0007669"/>
    <property type="project" value="UniProtKB-KW"/>
</dbReference>
<dbReference type="CDD" id="cd00429">
    <property type="entry name" value="RPE"/>
    <property type="match status" value="1"/>
</dbReference>
<dbReference type="FunFam" id="3.20.20.70:FF:000004">
    <property type="entry name" value="Ribulose-phosphate 3-epimerase"/>
    <property type="match status" value="1"/>
</dbReference>
<dbReference type="Gene3D" id="3.20.20.70">
    <property type="entry name" value="Aldolase class I"/>
    <property type="match status" value="1"/>
</dbReference>
<dbReference type="HAMAP" id="MF_02227">
    <property type="entry name" value="RPE"/>
    <property type="match status" value="1"/>
</dbReference>
<dbReference type="InterPro" id="IPR013785">
    <property type="entry name" value="Aldolase_TIM"/>
</dbReference>
<dbReference type="InterPro" id="IPR026019">
    <property type="entry name" value="Ribul_P_3_epim"/>
</dbReference>
<dbReference type="InterPro" id="IPR000056">
    <property type="entry name" value="Ribul_P_3_epim-like"/>
</dbReference>
<dbReference type="InterPro" id="IPR011060">
    <property type="entry name" value="RibuloseP-bd_barrel"/>
</dbReference>
<dbReference type="NCBIfam" id="NF004076">
    <property type="entry name" value="PRK05581.1-4"/>
    <property type="match status" value="1"/>
</dbReference>
<dbReference type="NCBIfam" id="TIGR01163">
    <property type="entry name" value="rpe"/>
    <property type="match status" value="1"/>
</dbReference>
<dbReference type="PANTHER" id="PTHR11749">
    <property type="entry name" value="RIBULOSE-5-PHOSPHATE-3-EPIMERASE"/>
    <property type="match status" value="1"/>
</dbReference>
<dbReference type="Pfam" id="PF00834">
    <property type="entry name" value="Ribul_P_3_epim"/>
    <property type="match status" value="1"/>
</dbReference>
<dbReference type="PIRSF" id="PIRSF001461">
    <property type="entry name" value="RPE"/>
    <property type="match status" value="1"/>
</dbReference>
<dbReference type="SUPFAM" id="SSF51366">
    <property type="entry name" value="Ribulose-phoshate binding barrel"/>
    <property type="match status" value="1"/>
</dbReference>
<dbReference type="PROSITE" id="PS01085">
    <property type="entry name" value="RIBUL_P_3_EPIMER_1"/>
    <property type="match status" value="1"/>
</dbReference>
<dbReference type="PROSITE" id="PS01086">
    <property type="entry name" value="RIBUL_P_3_EPIMER_2"/>
    <property type="match status" value="1"/>
</dbReference>
<comment type="function">
    <text evidence="1">Catalyzes the reversible epimerization of D-ribulose 5-phosphate to D-xylulose 5-phosphate.</text>
</comment>
<comment type="catalytic activity">
    <reaction evidence="1">
        <text>D-ribulose 5-phosphate = D-xylulose 5-phosphate</text>
        <dbReference type="Rhea" id="RHEA:13677"/>
        <dbReference type="ChEBI" id="CHEBI:57737"/>
        <dbReference type="ChEBI" id="CHEBI:58121"/>
        <dbReference type="EC" id="5.1.3.1"/>
    </reaction>
</comment>
<comment type="cofactor">
    <cofactor evidence="1">
        <name>a divalent metal cation</name>
        <dbReference type="ChEBI" id="CHEBI:60240"/>
    </cofactor>
    <text evidence="1">Binds 1 divalent metal cation per subunit.</text>
</comment>
<comment type="pathway">
    <text evidence="1">Carbohydrate degradation.</text>
</comment>
<comment type="similarity">
    <text evidence="1">Belongs to the ribulose-phosphate 3-epimerase family.</text>
</comment>
<comment type="sequence caution" evidence="2">
    <conflict type="frameshift">
        <sequence resource="EMBL-CDS" id="AAB27778"/>
    </conflict>
</comment>
<protein>
    <recommendedName>
        <fullName evidence="1">Ribulose-phosphate 3-epimerase</fullName>
        <ecNumber evidence="1">5.1.3.1</ecNumber>
    </recommendedName>
</protein>
<proteinExistence type="inferred from homology"/>
<accession>P51013</accession>
<name>RPE_RHORU</name>
<evidence type="ECO:0000255" key="1">
    <source>
        <dbReference type="HAMAP-Rule" id="MF_02227"/>
    </source>
</evidence>
<evidence type="ECO:0000305" key="2"/>
<gene>
    <name evidence="1" type="primary">rpe</name>
    <name type="synonym">cbbE</name>
</gene>
<keyword id="KW-0113">Calvin cycle</keyword>
<keyword id="KW-0119">Carbohydrate metabolism</keyword>
<keyword id="KW-0413">Isomerase</keyword>
<keyword id="KW-0479">Metal-binding</keyword>
<organism>
    <name type="scientific">Rhodospirillum rubrum</name>
    <dbReference type="NCBI Taxonomy" id="1085"/>
    <lineage>
        <taxon>Bacteria</taxon>
        <taxon>Pseudomonadati</taxon>
        <taxon>Pseudomonadota</taxon>
        <taxon>Alphaproteobacteria</taxon>
        <taxon>Rhodospirillales</taxon>
        <taxon>Rhodospirillaceae</taxon>
        <taxon>Rhodospirillum</taxon>
    </lineage>
</organism>
<sequence length="225" mass="23765">MTRAIRIAPSLLSADFAISRPRCPSDGRTGADILHFDVMDNHYVPNLTVGPLVCAALRPHTSLPIDVHLMTRPVDPLIDSFAEAGADMITFHPEASDHVHRSVQMIRKRGLKAGVALNPASPLSLLDHILEDLDLVLIMSVNPGFGGQSFIPSALPKIAALANGRRRACRGDRVDGGVNPADARALARPGADILVRLAIFGASDRAKAIASIRGAAESGLGQEAA</sequence>
<feature type="chain" id="PRO_0000171559" description="Ribulose-phosphate 3-epimerase">
    <location>
        <begin position="1"/>
        <end position="225"/>
    </location>
</feature>
<feature type="active site" description="Proton acceptor" evidence="1">
    <location>
        <position position="37"/>
    </location>
</feature>
<feature type="active site" description="Proton donor" evidence="1">
    <location>
        <position position="175"/>
    </location>
</feature>
<feature type="binding site" evidence="1">
    <location>
        <position position="10"/>
    </location>
    <ligand>
        <name>substrate</name>
    </ligand>
</feature>
<feature type="binding site" evidence="1">
    <location>
        <position position="35"/>
    </location>
    <ligand>
        <name>a divalent metal cation</name>
        <dbReference type="ChEBI" id="CHEBI:60240"/>
    </ligand>
</feature>
<feature type="binding site" evidence="1">
    <location>
        <position position="37"/>
    </location>
    <ligand>
        <name>a divalent metal cation</name>
        <dbReference type="ChEBI" id="CHEBI:60240"/>
    </ligand>
</feature>
<feature type="binding site" evidence="1">
    <location>
        <position position="68"/>
    </location>
    <ligand>
        <name>a divalent metal cation</name>
        <dbReference type="ChEBI" id="CHEBI:60240"/>
    </ligand>
</feature>
<feature type="binding site" evidence="1">
    <location>
        <position position="68"/>
    </location>
    <ligand>
        <name>substrate</name>
    </ligand>
</feature>
<feature type="binding site" evidence="1">
    <location>
        <begin position="144"/>
        <end position="147"/>
    </location>
    <ligand>
        <name>substrate</name>
    </ligand>
</feature>
<feature type="binding site" evidence="1">
    <location>
        <begin position="175"/>
        <end position="177"/>
    </location>
    <ligand>
        <name>substrate</name>
    </ligand>
</feature>
<feature type="binding site" evidence="1">
    <location>
        <position position="175"/>
    </location>
    <ligand>
        <name>a divalent metal cation</name>
        <dbReference type="ChEBI" id="CHEBI:60240"/>
    </ligand>
</feature>